<dbReference type="EC" id="3.1.21.7" evidence="1"/>
<dbReference type="EMBL" id="CP001251">
    <property type="protein sequence ID" value="ACK42053.1"/>
    <property type="molecule type" value="Genomic_DNA"/>
</dbReference>
<dbReference type="RefSeq" id="WP_012583138.1">
    <property type="nucleotide sequence ID" value="NC_011661.1"/>
</dbReference>
<dbReference type="RefSeq" id="YP_002352667.1">
    <property type="nucleotide sequence ID" value="NC_011661.1"/>
</dbReference>
<dbReference type="SMR" id="B8DZX0"/>
<dbReference type="FunCoup" id="B8DZX0">
    <property type="interactions" value="129"/>
</dbReference>
<dbReference type="STRING" id="515635.Dtur_0771"/>
<dbReference type="EnsemblBacteria" id="ACK42053">
    <property type="protein sequence ID" value="ACK42053"/>
    <property type="gene ID" value="Dtur_0771"/>
</dbReference>
<dbReference type="KEGG" id="dtu:Dtur_0771"/>
<dbReference type="PATRIC" id="fig|515635.4.peg.808"/>
<dbReference type="eggNOG" id="COG1515">
    <property type="taxonomic scope" value="Bacteria"/>
</dbReference>
<dbReference type="HOGENOM" id="CLU_047631_1_1_0"/>
<dbReference type="InParanoid" id="B8DZX0"/>
<dbReference type="OrthoDB" id="9790916at2"/>
<dbReference type="Proteomes" id="UP000007719">
    <property type="component" value="Chromosome"/>
</dbReference>
<dbReference type="GO" id="GO:0005737">
    <property type="term" value="C:cytoplasm"/>
    <property type="evidence" value="ECO:0007669"/>
    <property type="project" value="UniProtKB-SubCell"/>
</dbReference>
<dbReference type="GO" id="GO:0043737">
    <property type="term" value="F:deoxyribonuclease V activity"/>
    <property type="evidence" value="ECO:0000318"/>
    <property type="project" value="GO_Central"/>
</dbReference>
<dbReference type="GO" id="GO:0000287">
    <property type="term" value="F:magnesium ion binding"/>
    <property type="evidence" value="ECO:0007669"/>
    <property type="project" value="UniProtKB-UniRule"/>
</dbReference>
<dbReference type="GO" id="GO:0016891">
    <property type="term" value="F:RNA endonuclease activity, producing 5'-phosphomonoesters"/>
    <property type="evidence" value="ECO:0000318"/>
    <property type="project" value="GO_Central"/>
</dbReference>
<dbReference type="GO" id="GO:0003727">
    <property type="term" value="F:single-stranded RNA binding"/>
    <property type="evidence" value="ECO:0000318"/>
    <property type="project" value="GO_Central"/>
</dbReference>
<dbReference type="GO" id="GO:0006281">
    <property type="term" value="P:DNA repair"/>
    <property type="evidence" value="ECO:0007669"/>
    <property type="project" value="UniProtKB-UniRule"/>
</dbReference>
<dbReference type="CDD" id="cd06559">
    <property type="entry name" value="Endonuclease_V"/>
    <property type="match status" value="1"/>
</dbReference>
<dbReference type="FunFam" id="3.30.2170.10:FF:000008">
    <property type="entry name" value="Endonuclease V"/>
    <property type="match status" value="1"/>
</dbReference>
<dbReference type="Gene3D" id="3.30.2170.10">
    <property type="entry name" value="archaeoglobus fulgidus dsm 4304 superfamily"/>
    <property type="match status" value="1"/>
</dbReference>
<dbReference type="HAMAP" id="MF_00801">
    <property type="entry name" value="Endonuclease_5"/>
    <property type="match status" value="1"/>
</dbReference>
<dbReference type="InterPro" id="IPR007581">
    <property type="entry name" value="Endonuclease-V"/>
</dbReference>
<dbReference type="NCBIfam" id="NF008629">
    <property type="entry name" value="PRK11617.1"/>
    <property type="match status" value="1"/>
</dbReference>
<dbReference type="PANTHER" id="PTHR28511">
    <property type="entry name" value="ENDONUCLEASE V"/>
    <property type="match status" value="1"/>
</dbReference>
<dbReference type="PANTHER" id="PTHR28511:SF1">
    <property type="entry name" value="ENDONUCLEASE V"/>
    <property type="match status" value="1"/>
</dbReference>
<dbReference type="Pfam" id="PF04493">
    <property type="entry name" value="Endonuclease_5"/>
    <property type="match status" value="1"/>
</dbReference>
<accession>B8DZX0</accession>
<name>NFI_DICTD</name>
<reference key="1">
    <citation type="journal article" date="2016" name="Front. Microbiol.">
        <title>The complete genome sequence of hyperthermophile Dictyoglomus turgidum DSM 6724 reveals a specialized carbohydrate fermentor.</title>
        <authorList>
            <person name="Brumm P.J."/>
            <person name="Gowda K."/>
            <person name="Robb F.T."/>
            <person name="Mead D.A."/>
        </authorList>
    </citation>
    <scope>NUCLEOTIDE SEQUENCE [LARGE SCALE GENOMIC DNA]</scope>
    <source>
        <strain>DSM 6724 / Z-1310</strain>
    </source>
</reference>
<sequence length="228" mass="25954">MDWGREFFKWRGYEETVKLQEELSKKIILEDKFKELRYIGGVDTSSLGEKIVGIITILVFKTLELVEISVALSEVNFPYIPGFLSFREGPVILRAWEKLKIKPDLLIFDGQGIAHPRRLGIASHIGYVLDVPSIGCAKNILVGFYKEPDKRKGSFEYIYHKGEIVGAAVRTKDNVKPVFVSLGHKISLNTSIDIILKTSTKYRIPEPVRLAHLYSKRMLNSEIEGEPF</sequence>
<proteinExistence type="inferred from homology"/>
<protein>
    <recommendedName>
        <fullName evidence="1">Endonuclease V</fullName>
        <ecNumber evidence="1">3.1.21.7</ecNumber>
    </recommendedName>
    <alternativeName>
        <fullName evidence="1">Deoxyinosine 3'endonuclease</fullName>
    </alternativeName>
    <alternativeName>
        <fullName evidence="1">Deoxyribonuclease V</fullName>
        <shortName evidence="1">DNase V</shortName>
    </alternativeName>
</protein>
<keyword id="KW-0963">Cytoplasm</keyword>
<keyword id="KW-0227">DNA damage</keyword>
<keyword id="KW-0234">DNA repair</keyword>
<keyword id="KW-0255">Endonuclease</keyword>
<keyword id="KW-0378">Hydrolase</keyword>
<keyword id="KW-0460">Magnesium</keyword>
<keyword id="KW-0479">Metal-binding</keyword>
<keyword id="KW-0540">Nuclease</keyword>
<keyword id="KW-1185">Reference proteome</keyword>
<comment type="function">
    <text evidence="1">DNA repair enzyme involved in the repair of deaminated bases. Selectively cleaves double-stranded DNA at the second phosphodiester bond 3' to a deoxyinosine leaving behind the intact lesion on the nicked DNA.</text>
</comment>
<comment type="catalytic activity">
    <reaction evidence="1">
        <text>Endonucleolytic cleavage at apurinic or apyrimidinic sites to products with a 5'-phosphate.</text>
        <dbReference type="EC" id="3.1.21.7"/>
    </reaction>
</comment>
<comment type="cofactor">
    <cofactor evidence="1">
        <name>Mg(2+)</name>
        <dbReference type="ChEBI" id="CHEBI:18420"/>
    </cofactor>
</comment>
<comment type="subcellular location">
    <subcellularLocation>
        <location evidence="1">Cytoplasm</location>
    </subcellularLocation>
</comment>
<comment type="similarity">
    <text evidence="1">Belongs to the endonuclease V family.</text>
</comment>
<feature type="chain" id="PRO_1000133869" description="Endonuclease V">
    <location>
        <begin position="1"/>
        <end position="228"/>
    </location>
</feature>
<feature type="binding site" evidence="1">
    <location>
        <position position="43"/>
    </location>
    <ligand>
        <name>Mg(2+)</name>
        <dbReference type="ChEBI" id="CHEBI:18420"/>
    </ligand>
</feature>
<feature type="binding site" evidence="1">
    <location>
        <position position="109"/>
    </location>
    <ligand>
        <name>Mg(2+)</name>
        <dbReference type="ChEBI" id="CHEBI:18420"/>
    </ligand>
</feature>
<feature type="site" description="Interaction with target DNA" evidence="1">
    <location>
        <position position="79"/>
    </location>
</feature>
<gene>
    <name evidence="1" type="primary">nfi</name>
    <name type="ordered locus">Dtur_0771</name>
</gene>
<evidence type="ECO:0000255" key="1">
    <source>
        <dbReference type="HAMAP-Rule" id="MF_00801"/>
    </source>
</evidence>
<organism>
    <name type="scientific">Dictyoglomus turgidum (strain DSM 6724 / Z-1310)</name>
    <dbReference type="NCBI Taxonomy" id="515635"/>
    <lineage>
        <taxon>Bacteria</taxon>
        <taxon>Pseudomonadati</taxon>
        <taxon>Dictyoglomota</taxon>
        <taxon>Dictyoglomia</taxon>
        <taxon>Dictyoglomales</taxon>
        <taxon>Dictyoglomaceae</taxon>
        <taxon>Dictyoglomus</taxon>
    </lineage>
</organism>